<feature type="chain" id="PRO_0000418656" description="Galactinol synthase 2">
    <location>
        <begin position="1" status="less than"/>
        <end position="292"/>
    </location>
</feature>
<feature type="active site" evidence="1">
    <location>
        <position position="65"/>
    </location>
</feature>
<feature type="binding site" evidence="1">
    <location>
        <position position="81"/>
    </location>
    <ligand>
        <name>Mn(2+)</name>
        <dbReference type="ChEBI" id="CHEBI:29035"/>
    </ligand>
</feature>
<feature type="binding site" evidence="1">
    <location>
        <position position="83"/>
    </location>
    <ligand>
        <name>Mn(2+)</name>
        <dbReference type="ChEBI" id="CHEBI:29035"/>
    </ligand>
</feature>
<feature type="binding site" evidence="1">
    <location>
        <position position="218"/>
    </location>
    <ligand>
        <name>Mn(2+)</name>
        <dbReference type="ChEBI" id="CHEBI:29035"/>
    </ligand>
</feature>
<feature type="non-terminal residue">
    <location>
        <position position="1"/>
    </location>
</feature>
<name>GOLS2_AJURE</name>
<evidence type="ECO:0000250" key="1"/>
<evidence type="ECO:0000269" key="2">
    <source>
    </source>
</evidence>
<evidence type="ECO:0000305" key="3"/>
<accession>Q9XGN3</accession>
<dbReference type="EC" id="2.4.1.123"/>
<dbReference type="EMBL" id="AJ237694">
    <property type="protein sequence ID" value="CAB51534.1"/>
    <property type="molecule type" value="mRNA"/>
</dbReference>
<dbReference type="SMR" id="Q9XGN3"/>
<dbReference type="CAZy" id="GT8">
    <property type="family name" value="Glycosyltransferase Family 8"/>
</dbReference>
<dbReference type="BRENDA" id="2.4.1.123">
    <property type="organism ID" value="222"/>
</dbReference>
<dbReference type="GO" id="GO:0005737">
    <property type="term" value="C:cytoplasm"/>
    <property type="evidence" value="ECO:0007669"/>
    <property type="project" value="UniProtKB-SubCell"/>
</dbReference>
<dbReference type="GO" id="GO:0047216">
    <property type="term" value="F:inositol 3-alpha-galactosyltransferase activity"/>
    <property type="evidence" value="ECO:0000314"/>
    <property type="project" value="UniProtKB"/>
</dbReference>
<dbReference type="GO" id="GO:0046872">
    <property type="term" value="F:metal ion binding"/>
    <property type="evidence" value="ECO:0007669"/>
    <property type="project" value="UniProtKB-KW"/>
</dbReference>
<dbReference type="GO" id="GO:0070417">
    <property type="term" value="P:cellular response to cold"/>
    <property type="evidence" value="ECO:0000270"/>
    <property type="project" value="UniProtKB"/>
</dbReference>
<dbReference type="GO" id="GO:0006012">
    <property type="term" value="P:galactose metabolic process"/>
    <property type="evidence" value="ECO:0007669"/>
    <property type="project" value="UniProtKB-KW"/>
</dbReference>
<dbReference type="GO" id="GO:0010325">
    <property type="term" value="P:raffinose family oligosaccharide biosynthetic process"/>
    <property type="evidence" value="ECO:0000314"/>
    <property type="project" value="UniProtKB"/>
</dbReference>
<dbReference type="GO" id="GO:0015773">
    <property type="term" value="P:raffinose transport"/>
    <property type="evidence" value="ECO:0000314"/>
    <property type="project" value="UniProtKB"/>
</dbReference>
<dbReference type="CDD" id="cd02537">
    <property type="entry name" value="GT8_Glycogenin"/>
    <property type="match status" value="1"/>
</dbReference>
<dbReference type="FunFam" id="3.90.550.10:FF:000049">
    <property type="entry name" value="Hexosyltransferase"/>
    <property type="match status" value="1"/>
</dbReference>
<dbReference type="Gene3D" id="3.90.550.10">
    <property type="entry name" value="Spore Coat Polysaccharide Biosynthesis Protein SpsA, Chain A"/>
    <property type="match status" value="1"/>
</dbReference>
<dbReference type="InterPro" id="IPR002495">
    <property type="entry name" value="Glyco_trans_8"/>
</dbReference>
<dbReference type="InterPro" id="IPR050587">
    <property type="entry name" value="GNT1/Glycosyltrans_8"/>
</dbReference>
<dbReference type="InterPro" id="IPR029044">
    <property type="entry name" value="Nucleotide-diphossugar_trans"/>
</dbReference>
<dbReference type="PANTHER" id="PTHR11183">
    <property type="entry name" value="GLYCOGENIN SUBFAMILY MEMBER"/>
    <property type="match status" value="1"/>
</dbReference>
<dbReference type="Pfam" id="PF01501">
    <property type="entry name" value="Glyco_transf_8"/>
    <property type="match status" value="1"/>
</dbReference>
<dbReference type="SUPFAM" id="SSF53448">
    <property type="entry name" value="Nucleotide-diphospho-sugar transferases"/>
    <property type="match status" value="1"/>
</dbReference>
<keyword id="KW-0119">Carbohydrate metabolism</keyword>
<keyword id="KW-0963">Cytoplasm</keyword>
<keyword id="KW-0299">Galactose metabolism</keyword>
<keyword id="KW-0328">Glycosyltransferase</keyword>
<keyword id="KW-0464">Manganese</keyword>
<keyword id="KW-0479">Metal-binding</keyword>
<keyword id="KW-0808">Transferase</keyword>
<protein>
    <recommendedName>
        <fullName>Galactinol synthase 2</fullName>
        <shortName>ArGolS2</shortName>
        <shortName>GolS-2</shortName>
        <ecNumber>2.4.1.123</ecNumber>
    </recommendedName>
</protein>
<comment type="function">
    <text evidence="1 2">May promote plant stress tolerance (By similarity). Galactinol synthase mainly involved in the biosynthesis of transport raffinose family oligosaccharides (RFOs) that function as osmoprotectants.</text>
</comment>
<comment type="catalytic activity">
    <reaction evidence="2">
        <text>myo-inositol + UDP-alpha-D-galactose = alpha-D-galactosyl-(1-&gt;3)-1D-myo-inositol + UDP + H(+)</text>
        <dbReference type="Rhea" id="RHEA:12464"/>
        <dbReference type="ChEBI" id="CHEBI:15378"/>
        <dbReference type="ChEBI" id="CHEBI:17268"/>
        <dbReference type="ChEBI" id="CHEBI:17505"/>
        <dbReference type="ChEBI" id="CHEBI:58223"/>
        <dbReference type="ChEBI" id="CHEBI:66914"/>
        <dbReference type="EC" id="2.4.1.123"/>
    </reaction>
</comment>
<comment type="cofactor">
    <cofactor evidence="1">
        <name>a divalent metal cation</name>
        <dbReference type="ChEBI" id="CHEBI:60240"/>
    </cofactor>
</comment>
<comment type="subcellular location">
    <subcellularLocation>
        <location evidence="3">Cytoplasm</location>
    </subcellularLocation>
</comment>
<comment type="tissue specificity">
    <text evidence="2">Present in phloem-associated intermediary cells. Weakly expressed in leaves.</text>
</comment>
<comment type="induction">
    <text evidence="2">By cold. Follows a circadian rhythm; accumulates mostly at the dark phase transition.</text>
</comment>
<comment type="similarity">
    <text evidence="3">Belongs to the glycosyltransferase 8 family. Galactosyltransferase subfamily.</text>
</comment>
<reference key="1">
    <citation type="journal article" date="2000" name="Plant J.">
        <title>Allocation of raffinose family oligosaccharides to transport and storage pools in Ajuga reptans: the roles of two distinct galactinol synthases.</title>
        <authorList>
            <person name="Sprenger N."/>
            <person name="Keller F."/>
        </authorList>
    </citation>
    <scope>NUCLEOTIDE SEQUENCE [MRNA]</scope>
    <scope>FUNCTION</scope>
    <scope>TISSUE SPECIFICITY</scope>
    <scope>INDUCTION BY COLD</scope>
    <scope>CATALYTIC ACTIVITY</scope>
</reference>
<organism>
    <name type="scientific">Ajuga reptans</name>
    <name type="common">Bugle</name>
    <dbReference type="NCBI Taxonomy" id="38596"/>
    <lineage>
        <taxon>Eukaryota</taxon>
        <taxon>Viridiplantae</taxon>
        <taxon>Streptophyta</taxon>
        <taxon>Embryophyta</taxon>
        <taxon>Tracheophyta</taxon>
        <taxon>Spermatophyta</taxon>
        <taxon>Magnoliopsida</taxon>
        <taxon>eudicotyledons</taxon>
        <taxon>Gunneridae</taxon>
        <taxon>Pentapetalae</taxon>
        <taxon>asterids</taxon>
        <taxon>lamiids</taxon>
        <taxon>Lamiales</taxon>
        <taxon>Lamiaceae</taxon>
        <taxon>Ajugoideae</taxon>
        <taxon>Ajugeae</taxon>
        <taxon>Ajuga</taxon>
    </lineage>
</organism>
<sequence>VGLAKGLRKVGTIYPLVVAVLPDVPPEHRRILVEQGCVVREIEPVYPPENHTEFAMAYYVINYSKLRIWEFVEYSKMIYLDGDIQVFENIDHLFDLENGYFYAVMDCFCEKTWSHTPQYQIGYCQQSPKRVHWPKQLGPKPPLYFNAGMFVYEPSLPTYHDLLHTLKITPPTPFAEQDFLNMFLRDVYRPIPNVYNLVLAMLWRHPENVNLEAVKVVHYCAAGSKPWRYTGEEENMDRNDIKMLVNKWRDIYDDEMLDYNAVADPAADGLQLTAVLTEAAGVVRFIPAPSAA</sequence>
<proteinExistence type="evidence at protein level"/>
<gene>
    <name type="primary">GOLS2</name>
</gene>